<name>CHEB1_PSEPU</name>
<evidence type="ECO:0000255" key="1">
    <source>
        <dbReference type="HAMAP-Rule" id="MF_00099"/>
    </source>
</evidence>
<evidence type="ECO:0000256" key="2">
    <source>
        <dbReference type="SAM" id="MobiDB-lite"/>
    </source>
</evidence>
<sequence>MAVKVLVVDDSGFFRRRVSEILSADPTIQVVGTATNGKEAIDQALALKPDVITMDYEMPMMDGITAVRHIMQRCPTPVLMFSSLTHEGARVTLDALDAGAVDYLPKNFEDISRNPDKVKQMLCEKVHTISRSNRRLGSYARPAPVAAPVPASSPAPASSFASPAPARPAATARAAAPAASHSPAPKRKPYKLVAIGTSTGGPVALQRVLTQLPANFPAPIVLIQHMPAAFTKAFAERLDKLCRINVKEAEDGDMLRPGLALLAPGGKQMMIDGRGTVKILPGDERLNYKPCVDITFGSAAKSYGDKVLSVVLTGMGADGREGARLLKQGGSTVWAQDEASCVIYGMPMAIVKANLADAVYSLDDIGKHLVEACV</sequence>
<comment type="function">
    <text evidence="1">Involved in chemotaxis. Part of a chemotaxis signal transduction system that modulates chemotaxis in response to various stimuli. Catalyzes the demethylation of specific methylglutamate residues introduced into the chemoreceptors (methyl-accepting chemotaxis proteins or MCP) by CheR. Also mediates the irreversible deamidation of specific glutamine residues to glutamic acid.</text>
</comment>
<comment type="catalytic activity">
    <reaction evidence="1">
        <text>[protein]-L-glutamate 5-O-methyl ester + H2O = L-glutamyl-[protein] + methanol + H(+)</text>
        <dbReference type="Rhea" id="RHEA:23236"/>
        <dbReference type="Rhea" id="RHEA-COMP:10208"/>
        <dbReference type="Rhea" id="RHEA-COMP:10311"/>
        <dbReference type="ChEBI" id="CHEBI:15377"/>
        <dbReference type="ChEBI" id="CHEBI:15378"/>
        <dbReference type="ChEBI" id="CHEBI:17790"/>
        <dbReference type="ChEBI" id="CHEBI:29973"/>
        <dbReference type="ChEBI" id="CHEBI:82795"/>
        <dbReference type="EC" id="3.1.1.61"/>
    </reaction>
</comment>
<comment type="catalytic activity">
    <reaction evidence="1">
        <text>L-glutaminyl-[protein] + H2O = L-glutamyl-[protein] + NH4(+)</text>
        <dbReference type="Rhea" id="RHEA:16441"/>
        <dbReference type="Rhea" id="RHEA-COMP:10207"/>
        <dbReference type="Rhea" id="RHEA-COMP:10208"/>
        <dbReference type="ChEBI" id="CHEBI:15377"/>
        <dbReference type="ChEBI" id="CHEBI:28938"/>
        <dbReference type="ChEBI" id="CHEBI:29973"/>
        <dbReference type="ChEBI" id="CHEBI:30011"/>
        <dbReference type="EC" id="3.5.1.44"/>
    </reaction>
</comment>
<comment type="subcellular location">
    <subcellularLocation>
        <location evidence="1">Cytoplasm</location>
    </subcellularLocation>
</comment>
<comment type="domain">
    <text evidence="1">Contains a C-terminal catalytic domain, and an N-terminal region which modulates catalytic activity.</text>
</comment>
<comment type="PTM">
    <text evidence="1">Phosphorylated by CheA. Phosphorylation of the N-terminal regulatory domain activates the methylesterase activity.</text>
</comment>
<comment type="similarity">
    <text evidence="1">Belongs to the CheB family.</text>
</comment>
<dbReference type="EC" id="3.1.1.61" evidence="1"/>
<dbReference type="EC" id="3.5.1.44" evidence="1"/>
<dbReference type="EMBL" id="AF031898">
    <property type="protein sequence ID" value="AAC08065.1"/>
    <property type="molecule type" value="Genomic_DNA"/>
</dbReference>
<dbReference type="EMBL" id="AF183382">
    <property type="protein sequence ID" value="AAF67048.1"/>
    <property type="molecule type" value="Genomic_DNA"/>
</dbReference>
<dbReference type="RefSeq" id="WP_016498569.1">
    <property type="nucleotide sequence ID" value="NZ_UGUX01000003.1"/>
</dbReference>
<dbReference type="SMR" id="O52262"/>
<dbReference type="eggNOG" id="COG2201">
    <property type="taxonomic scope" value="Bacteria"/>
</dbReference>
<dbReference type="GO" id="GO:0005737">
    <property type="term" value="C:cytoplasm"/>
    <property type="evidence" value="ECO:0007669"/>
    <property type="project" value="UniProtKB-SubCell"/>
</dbReference>
<dbReference type="GO" id="GO:0000156">
    <property type="term" value="F:phosphorelay response regulator activity"/>
    <property type="evidence" value="ECO:0007669"/>
    <property type="project" value="InterPro"/>
</dbReference>
<dbReference type="GO" id="GO:0008984">
    <property type="term" value="F:protein-glutamate methylesterase activity"/>
    <property type="evidence" value="ECO:0007669"/>
    <property type="project" value="UniProtKB-UniRule"/>
</dbReference>
<dbReference type="GO" id="GO:0050568">
    <property type="term" value="F:protein-glutamine glutaminase activity"/>
    <property type="evidence" value="ECO:0007669"/>
    <property type="project" value="UniProtKB-UniRule"/>
</dbReference>
<dbReference type="GO" id="GO:0006935">
    <property type="term" value="P:chemotaxis"/>
    <property type="evidence" value="ECO:0007669"/>
    <property type="project" value="UniProtKB-UniRule"/>
</dbReference>
<dbReference type="CDD" id="cd16432">
    <property type="entry name" value="CheB_Rec"/>
    <property type="match status" value="1"/>
</dbReference>
<dbReference type="CDD" id="cd17541">
    <property type="entry name" value="REC_CheB-like"/>
    <property type="match status" value="1"/>
</dbReference>
<dbReference type="FunFam" id="3.40.50.2300:FF:000077">
    <property type="entry name" value="Chemotaxis response regulator"/>
    <property type="match status" value="1"/>
</dbReference>
<dbReference type="FunFam" id="3.40.50.180:FF:000001">
    <property type="entry name" value="Protein-glutamate methylesterase/protein-glutamine glutaminase"/>
    <property type="match status" value="1"/>
</dbReference>
<dbReference type="Gene3D" id="3.40.50.2300">
    <property type="match status" value="1"/>
</dbReference>
<dbReference type="Gene3D" id="3.40.50.180">
    <property type="entry name" value="Methylesterase CheB, C-terminal domain"/>
    <property type="match status" value="1"/>
</dbReference>
<dbReference type="HAMAP" id="MF_00099">
    <property type="entry name" value="CheB_chemtxs"/>
    <property type="match status" value="1"/>
</dbReference>
<dbReference type="InterPro" id="IPR008248">
    <property type="entry name" value="CheB-like"/>
</dbReference>
<dbReference type="InterPro" id="IPR035909">
    <property type="entry name" value="CheB_C"/>
</dbReference>
<dbReference type="InterPro" id="IPR011006">
    <property type="entry name" value="CheY-like_superfamily"/>
</dbReference>
<dbReference type="InterPro" id="IPR000673">
    <property type="entry name" value="Sig_transdc_resp-reg_Me-estase"/>
</dbReference>
<dbReference type="InterPro" id="IPR001789">
    <property type="entry name" value="Sig_transdc_resp-reg_receiver"/>
</dbReference>
<dbReference type="NCBIfam" id="NF001965">
    <property type="entry name" value="PRK00742.1"/>
    <property type="match status" value="1"/>
</dbReference>
<dbReference type="PANTHER" id="PTHR42872">
    <property type="entry name" value="PROTEIN-GLUTAMATE METHYLESTERASE/PROTEIN-GLUTAMINE GLUTAMINASE"/>
    <property type="match status" value="1"/>
</dbReference>
<dbReference type="PANTHER" id="PTHR42872:SF3">
    <property type="entry name" value="PROTEIN-GLUTAMATE METHYLESTERASE_PROTEIN-GLUTAMINE GLUTAMINASE 1"/>
    <property type="match status" value="1"/>
</dbReference>
<dbReference type="Pfam" id="PF01339">
    <property type="entry name" value="CheB_methylest"/>
    <property type="match status" value="1"/>
</dbReference>
<dbReference type="Pfam" id="PF00072">
    <property type="entry name" value="Response_reg"/>
    <property type="match status" value="1"/>
</dbReference>
<dbReference type="PIRSF" id="PIRSF000876">
    <property type="entry name" value="RR_chemtxs_CheB"/>
    <property type="match status" value="1"/>
</dbReference>
<dbReference type="SMART" id="SM00448">
    <property type="entry name" value="REC"/>
    <property type="match status" value="1"/>
</dbReference>
<dbReference type="SUPFAM" id="SSF52172">
    <property type="entry name" value="CheY-like"/>
    <property type="match status" value="1"/>
</dbReference>
<dbReference type="SUPFAM" id="SSF52738">
    <property type="entry name" value="Methylesterase CheB, C-terminal domain"/>
    <property type="match status" value="1"/>
</dbReference>
<dbReference type="PROSITE" id="PS50122">
    <property type="entry name" value="CHEB"/>
    <property type="match status" value="1"/>
</dbReference>
<dbReference type="PROSITE" id="PS50110">
    <property type="entry name" value="RESPONSE_REGULATORY"/>
    <property type="match status" value="1"/>
</dbReference>
<protein>
    <recommendedName>
        <fullName evidence="1">Protein-glutamate methylesterase/protein-glutamine glutaminase</fullName>
        <ecNumber evidence="1">3.1.1.61</ecNumber>
        <ecNumber evidence="1">3.5.1.44</ecNumber>
    </recommendedName>
</protein>
<organism>
    <name type="scientific">Pseudomonas putida</name>
    <name type="common">Arthrobacter siderocapsulatus</name>
    <dbReference type="NCBI Taxonomy" id="303"/>
    <lineage>
        <taxon>Bacteria</taxon>
        <taxon>Pseudomonadati</taxon>
        <taxon>Pseudomonadota</taxon>
        <taxon>Gammaproteobacteria</taxon>
        <taxon>Pseudomonadales</taxon>
        <taxon>Pseudomonadaceae</taxon>
        <taxon>Pseudomonas</taxon>
    </lineage>
</organism>
<gene>
    <name evidence="1" type="primary">cheB</name>
</gene>
<keyword id="KW-0145">Chemotaxis</keyword>
<keyword id="KW-0963">Cytoplasm</keyword>
<keyword id="KW-0378">Hydrolase</keyword>
<keyword id="KW-0597">Phosphoprotein</keyword>
<reference key="1">
    <citation type="journal article" date="1998" name="FEMS Microbiol. Lett.">
        <title>Identification of a chemotaxis gene region from Pseudomonas putida.</title>
        <authorList>
            <person name="Ditty J.L."/>
            <person name="Grimm A.C."/>
            <person name="Harwood C.S."/>
        </authorList>
    </citation>
    <scope>NUCLEOTIDE SEQUENCE [GENOMIC DNA]</scope>
    <source>
        <strain>PRS2000</strain>
    </source>
</reference>
<reference key="2">
    <citation type="journal article" date="2000" name="Mol. Microbiol.">
        <title>The G-protein FlhF has a role in polar flagellar placement and general stress response induction in Pseudomonas putida.</title>
        <authorList>
            <person name="Pandza S."/>
            <person name="Baetens M."/>
            <person name="Park C.H."/>
            <person name="Au T."/>
            <person name="Keyhan M."/>
            <person name="Matin A."/>
        </authorList>
    </citation>
    <scope>NUCLEOTIDE SEQUENCE [GENOMIC DNA]</scope>
    <source>
        <strain>MK1</strain>
    </source>
</reference>
<accession>O52262</accession>
<accession>Q9L942</accession>
<feature type="chain" id="PRO_0000158013" description="Protein-glutamate methylesterase/protein-glutamine glutaminase">
    <location>
        <begin position="1"/>
        <end position="374"/>
    </location>
</feature>
<feature type="domain" description="Response regulatory" evidence="1">
    <location>
        <begin position="4"/>
        <end position="121"/>
    </location>
</feature>
<feature type="domain" description="CheB-type methylesterase" evidence="1">
    <location>
        <begin position="183"/>
        <end position="374"/>
    </location>
</feature>
<feature type="region of interest" description="Disordered" evidence="2">
    <location>
        <begin position="144"/>
        <end position="186"/>
    </location>
</feature>
<feature type="compositionally biased region" description="Low complexity" evidence="2">
    <location>
        <begin position="154"/>
        <end position="183"/>
    </location>
</feature>
<feature type="active site" evidence="1">
    <location>
        <position position="198"/>
    </location>
</feature>
<feature type="active site" evidence="1">
    <location>
        <position position="225"/>
    </location>
</feature>
<feature type="active site" evidence="1">
    <location>
        <position position="318"/>
    </location>
</feature>
<feature type="modified residue" description="4-aspartylphosphate" evidence="1">
    <location>
        <position position="55"/>
    </location>
</feature>
<feature type="sequence variant" description="In MK1.">
    <original>RPAPVAA</original>
    <variation>LAGAGRR</variation>
    <location>
        <begin position="141"/>
        <end position="147"/>
    </location>
</feature>
<feature type="sequence variant" description="In MK1.">
    <original>VA</original>
    <variation>LR</variation>
    <location>
        <begin position="193"/>
        <end position="194"/>
    </location>
</feature>
<proteinExistence type="inferred from homology"/>